<reference key="1">
    <citation type="journal article" date="2004" name="Nature">
        <title>Genome sequence of the Brown Norway rat yields insights into mammalian evolution.</title>
        <authorList>
            <person name="Gibbs R.A."/>
            <person name="Weinstock G.M."/>
            <person name="Metzker M.L."/>
            <person name="Muzny D.M."/>
            <person name="Sodergren E.J."/>
            <person name="Scherer S."/>
            <person name="Scott G."/>
            <person name="Steffen D."/>
            <person name="Worley K.C."/>
            <person name="Burch P.E."/>
            <person name="Okwuonu G."/>
            <person name="Hines S."/>
            <person name="Lewis L."/>
            <person name="Deramo C."/>
            <person name="Delgado O."/>
            <person name="Dugan-Rocha S."/>
            <person name="Miner G."/>
            <person name="Morgan M."/>
            <person name="Hawes A."/>
            <person name="Gill R."/>
            <person name="Holt R.A."/>
            <person name="Adams M.D."/>
            <person name="Amanatides P.G."/>
            <person name="Baden-Tillson H."/>
            <person name="Barnstead M."/>
            <person name="Chin S."/>
            <person name="Evans C.A."/>
            <person name="Ferriera S."/>
            <person name="Fosler C."/>
            <person name="Glodek A."/>
            <person name="Gu Z."/>
            <person name="Jennings D."/>
            <person name="Kraft C.L."/>
            <person name="Nguyen T."/>
            <person name="Pfannkoch C.M."/>
            <person name="Sitter C."/>
            <person name="Sutton G.G."/>
            <person name="Venter J.C."/>
            <person name="Woodage T."/>
            <person name="Smith D."/>
            <person name="Lee H.-M."/>
            <person name="Gustafson E."/>
            <person name="Cahill P."/>
            <person name="Kana A."/>
            <person name="Doucette-Stamm L."/>
            <person name="Weinstock K."/>
            <person name="Fechtel K."/>
            <person name="Weiss R.B."/>
            <person name="Dunn D.M."/>
            <person name="Green E.D."/>
            <person name="Blakesley R.W."/>
            <person name="Bouffard G.G."/>
            <person name="De Jong P.J."/>
            <person name="Osoegawa K."/>
            <person name="Zhu B."/>
            <person name="Marra M."/>
            <person name="Schein J."/>
            <person name="Bosdet I."/>
            <person name="Fjell C."/>
            <person name="Jones S."/>
            <person name="Krzywinski M."/>
            <person name="Mathewson C."/>
            <person name="Siddiqui A."/>
            <person name="Wye N."/>
            <person name="McPherson J."/>
            <person name="Zhao S."/>
            <person name="Fraser C.M."/>
            <person name="Shetty J."/>
            <person name="Shatsman S."/>
            <person name="Geer K."/>
            <person name="Chen Y."/>
            <person name="Abramzon S."/>
            <person name="Nierman W.C."/>
            <person name="Havlak P.H."/>
            <person name="Chen R."/>
            <person name="Durbin K.J."/>
            <person name="Egan A."/>
            <person name="Ren Y."/>
            <person name="Song X.-Z."/>
            <person name="Li B."/>
            <person name="Liu Y."/>
            <person name="Qin X."/>
            <person name="Cawley S."/>
            <person name="Cooney A.J."/>
            <person name="D'Souza L.M."/>
            <person name="Martin K."/>
            <person name="Wu J.Q."/>
            <person name="Gonzalez-Garay M.L."/>
            <person name="Jackson A.R."/>
            <person name="Kalafus K.J."/>
            <person name="McLeod M.P."/>
            <person name="Milosavljevic A."/>
            <person name="Virk D."/>
            <person name="Volkov A."/>
            <person name="Wheeler D.A."/>
            <person name="Zhang Z."/>
            <person name="Bailey J.A."/>
            <person name="Eichler E.E."/>
            <person name="Tuzun E."/>
            <person name="Birney E."/>
            <person name="Mongin E."/>
            <person name="Ureta-Vidal A."/>
            <person name="Woodwark C."/>
            <person name="Zdobnov E."/>
            <person name="Bork P."/>
            <person name="Suyama M."/>
            <person name="Torrents D."/>
            <person name="Alexandersson M."/>
            <person name="Trask B.J."/>
            <person name="Young J.M."/>
            <person name="Huang H."/>
            <person name="Wang H."/>
            <person name="Xing H."/>
            <person name="Daniels S."/>
            <person name="Gietzen D."/>
            <person name="Schmidt J."/>
            <person name="Stevens K."/>
            <person name="Vitt U."/>
            <person name="Wingrove J."/>
            <person name="Camara F."/>
            <person name="Mar Alba M."/>
            <person name="Abril J.F."/>
            <person name="Guigo R."/>
            <person name="Smit A."/>
            <person name="Dubchak I."/>
            <person name="Rubin E.M."/>
            <person name="Couronne O."/>
            <person name="Poliakov A."/>
            <person name="Huebner N."/>
            <person name="Ganten D."/>
            <person name="Goesele C."/>
            <person name="Hummel O."/>
            <person name="Kreitler T."/>
            <person name="Lee Y.-A."/>
            <person name="Monti J."/>
            <person name="Schulz H."/>
            <person name="Zimdahl H."/>
            <person name="Himmelbauer H."/>
            <person name="Lehrach H."/>
            <person name="Jacob H.J."/>
            <person name="Bromberg S."/>
            <person name="Gullings-Handley J."/>
            <person name="Jensen-Seaman M.I."/>
            <person name="Kwitek A.E."/>
            <person name="Lazar J."/>
            <person name="Pasko D."/>
            <person name="Tonellato P.J."/>
            <person name="Twigger S."/>
            <person name="Ponting C.P."/>
            <person name="Duarte J.M."/>
            <person name="Rice S."/>
            <person name="Goodstadt L."/>
            <person name="Beatson S.A."/>
            <person name="Emes R.D."/>
            <person name="Winter E.E."/>
            <person name="Webber C."/>
            <person name="Brandt P."/>
            <person name="Nyakatura G."/>
            <person name="Adetobi M."/>
            <person name="Chiaromonte F."/>
            <person name="Elnitski L."/>
            <person name="Eswara P."/>
            <person name="Hardison R.C."/>
            <person name="Hou M."/>
            <person name="Kolbe D."/>
            <person name="Makova K."/>
            <person name="Miller W."/>
            <person name="Nekrutenko A."/>
            <person name="Riemer C."/>
            <person name="Schwartz S."/>
            <person name="Taylor J."/>
            <person name="Yang S."/>
            <person name="Zhang Y."/>
            <person name="Lindpaintner K."/>
            <person name="Andrews T.D."/>
            <person name="Caccamo M."/>
            <person name="Clamp M."/>
            <person name="Clarke L."/>
            <person name="Curwen V."/>
            <person name="Durbin R.M."/>
            <person name="Eyras E."/>
            <person name="Searle S.M."/>
            <person name="Cooper G.M."/>
            <person name="Batzoglou S."/>
            <person name="Brudno M."/>
            <person name="Sidow A."/>
            <person name="Stone E.A."/>
            <person name="Payseur B.A."/>
            <person name="Bourque G."/>
            <person name="Lopez-Otin C."/>
            <person name="Puente X.S."/>
            <person name="Chakrabarti K."/>
            <person name="Chatterji S."/>
            <person name="Dewey C."/>
            <person name="Pachter L."/>
            <person name="Bray N."/>
            <person name="Yap V.B."/>
            <person name="Caspi A."/>
            <person name="Tesler G."/>
            <person name="Pevzner P.A."/>
            <person name="Haussler D."/>
            <person name="Roskin K.M."/>
            <person name="Baertsch R."/>
            <person name="Clawson H."/>
            <person name="Furey T.S."/>
            <person name="Hinrichs A.S."/>
            <person name="Karolchik D."/>
            <person name="Kent W.J."/>
            <person name="Rosenbloom K.R."/>
            <person name="Trumbower H."/>
            <person name="Weirauch M."/>
            <person name="Cooper D.N."/>
            <person name="Stenson P.D."/>
            <person name="Ma B."/>
            <person name="Brent M."/>
            <person name="Arumugam M."/>
            <person name="Shteynberg D."/>
            <person name="Copley R.R."/>
            <person name="Taylor M.S."/>
            <person name="Riethman H."/>
            <person name="Mudunuri U."/>
            <person name="Peterson J."/>
            <person name="Guyer M."/>
            <person name="Felsenfeld A."/>
            <person name="Old S."/>
            <person name="Mockrin S."/>
            <person name="Collins F.S."/>
        </authorList>
    </citation>
    <scope>NUCLEOTIDE SEQUENCE [LARGE SCALE GENOMIC DNA]</scope>
    <source>
        <strain>Brown Norway</strain>
    </source>
</reference>
<name>AGRF2_RAT</name>
<keyword id="KW-1015">Disulfide bond</keyword>
<keyword id="KW-0325">Glycoprotein</keyword>
<keyword id="KW-0472">Membrane</keyword>
<keyword id="KW-1185">Reference proteome</keyword>
<keyword id="KW-0732">Signal</keyword>
<keyword id="KW-0812">Transmembrane</keyword>
<keyword id="KW-1133">Transmembrane helix</keyword>
<evidence type="ECO:0000250" key="1">
    <source>
        <dbReference type="UniProtKB" id="E9Q4J9"/>
    </source>
</evidence>
<evidence type="ECO:0000255" key="2"/>
<evidence type="ECO:0000255" key="3">
    <source>
        <dbReference type="PROSITE-ProRule" id="PRU00098"/>
    </source>
</evidence>
<evidence type="ECO:0000305" key="4"/>
<proteinExistence type="inferred from homology"/>
<comment type="function">
    <text>Orphan receptor.</text>
</comment>
<comment type="subcellular location">
    <subcellularLocation>
        <location evidence="2">Membrane</location>
        <topology evidence="2">Multi-pass membrane protein</topology>
    </subcellularLocation>
</comment>
<comment type="miscellaneous">
    <text evidence="1">Most adhesion GPCRs undergo autoproteolysis at the GPS domain. ADGRF2 is not autoproteolyzed at the GPS motif because of the lack of a consensus catalytic triad sequence within GPS region of the GAIN-B domain.</text>
</comment>
<comment type="similarity">
    <text evidence="4">Belongs to the G-protein coupled receptor 2 family. Adhesion G-protein coupled receptor (ADGR) subfamily.</text>
</comment>
<gene>
    <name type="primary">Adgrf2</name>
    <name type="synonym">Gpr111</name>
    <name type="synonym">Pgr20</name>
</gene>
<dbReference type="EMBL" id="AABR06058952">
    <property type="status" value="NOT_ANNOTATED_CDS"/>
    <property type="molecule type" value="Genomic_DNA"/>
</dbReference>
<dbReference type="SMR" id="D4A3T6"/>
<dbReference type="STRING" id="10116.ENSRNOP00000035606"/>
<dbReference type="GlyCosmos" id="D4A3T6">
    <property type="glycosylation" value="5 sites, No reported glycans"/>
</dbReference>
<dbReference type="GlyGen" id="D4A3T6">
    <property type="glycosylation" value="5 sites"/>
</dbReference>
<dbReference type="PhosphoSitePlus" id="D4A3T6"/>
<dbReference type="PaxDb" id="10116-ENSRNOP00000035606"/>
<dbReference type="UCSC" id="RGD:1306718">
    <property type="organism name" value="rat"/>
</dbReference>
<dbReference type="AGR" id="RGD:1306718"/>
<dbReference type="RGD" id="1306718">
    <property type="gene designation" value="Adgrf2"/>
</dbReference>
<dbReference type="eggNOG" id="KOG4193">
    <property type="taxonomic scope" value="Eukaryota"/>
</dbReference>
<dbReference type="HOGENOM" id="CLU_002753_3_6_1"/>
<dbReference type="InParanoid" id="D4A3T6"/>
<dbReference type="OrthoDB" id="10040049at2759"/>
<dbReference type="PhylomeDB" id="D4A3T6"/>
<dbReference type="TreeFam" id="TF316380"/>
<dbReference type="PRO" id="PR:D4A3T6"/>
<dbReference type="Proteomes" id="UP000002494">
    <property type="component" value="Unplaced"/>
</dbReference>
<dbReference type="GO" id="GO:0016020">
    <property type="term" value="C:membrane"/>
    <property type="evidence" value="ECO:0007669"/>
    <property type="project" value="UniProtKB-SubCell"/>
</dbReference>
<dbReference type="GO" id="GO:0004930">
    <property type="term" value="F:G protein-coupled receptor activity"/>
    <property type="evidence" value="ECO:0000318"/>
    <property type="project" value="GO_Central"/>
</dbReference>
<dbReference type="GO" id="GO:0007189">
    <property type="term" value="P:adenylate cyclase-activating G protein-coupled receptor signaling pathway"/>
    <property type="evidence" value="ECO:0000318"/>
    <property type="project" value="GO_Central"/>
</dbReference>
<dbReference type="GO" id="GO:0007166">
    <property type="term" value="P:cell surface receptor signaling pathway"/>
    <property type="evidence" value="ECO:0007669"/>
    <property type="project" value="InterPro"/>
</dbReference>
<dbReference type="FunFam" id="2.60.220.50:FF:000015">
    <property type="entry name" value="Adhesion G protein-coupled receptor F4"/>
    <property type="match status" value="1"/>
</dbReference>
<dbReference type="FunFam" id="1.20.1070.10:FF:000058">
    <property type="entry name" value="Adhesion G protein-coupled receptor F5"/>
    <property type="match status" value="1"/>
</dbReference>
<dbReference type="Gene3D" id="2.60.220.50">
    <property type="match status" value="1"/>
</dbReference>
<dbReference type="Gene3D" id="1.20.1070.10">
    <property type="entry name" value="Rhodopsin 7-helix transmembrane proteins"/>
    <property type="match status" value="1"/>
</dbReference>
<dbReference type="InterPro" id="IPR051587">
    <property type="entry name" value="Adhesion_GPCR"/>
</dbReference>
<dbReference type="InterPro" id="IPR057244">
    <property type="entry name" value="GAIN_B"/>
</dbReference>
<dbReference type="InterPro" id="IPR046338">
    <property type="entry name" value="GAIN_dom_sf"/>
</dbReference>
<dbReference type="InterPro" id="IPR017981">
    <property type="entry name" value="GPCR_2-like_7TM"/>
</dbReference>
<dbReference type="InterPro" id="IPR000832">
    <property type="entry name" value="GPCR_2_secretin-like"/>
</dbReference>
<dbReference type="InterPro" id="IPR000203">
    <property type="entry name" value="GPS"/>
</dbReference>
<dbReference type="PANTHER" id="PTHR45813:SF6">
    <property type="entry name" value="ADHESION G-PROTEIN COUPLED RECEPTOR F2"/>
    <property type="match status" value="1"/>
</dbReference>
<dbReference type="PANTHER" id="PTHR45813">
    <property type="entry name" value="IG-LIKE DOMAIN-CONTAINING PROTEIN"/>
    <property type="match status" value="1"/>
</dbReference>
<dbReference type="Pfam" id="PF00002">
    <property type="entry name" value="7tm_2"/>
    <property type="match status" value="1"/>
</dbReference>
<dbReference type="Pfam" id="PF01825">
    <property type="entry name" value="GPS"/>
    <property type="match status" value="1"/>
</dbReference>
<dbReference type="PRINTS" id="PR00249">
    <property type="entry name" value="GPCRSECRETIN"/>
</dbReference>
<dbReference type="SMART" id="SM00303">
    <property type="entry name" value="GPS"/>
    <property type="match status" value="1"/>
</dbReference>
<dbReference type="PROSITE" id="PS50261">
    <property type="entry name" value="G_PROTEIN_RECEP_F2_4"/>
    <property type="match status" value="1"/>
</dbReference>
<dbReference type="PROSITE" id="PS50221">
    <property type="entry name" value="GAIN_B"/>
    <property type="match status" value="1"/>
</dbReference>
<protein>
    <recommendedName>
        <fullName>Adhesion G-protein coupled receptor F2</fullName>
    </recommendedName>
    <alternativeName>
        <fullName>G-protein coupled receptor 111</fullName>
    </alternativeName>
    <alternativeName>
        <fullName>G-protein coupled receptor PGR20</fullName>
    </alternativeName>
</protein>
<feature type="signal peptide" evidence="2">
    <location>
        <begin position="1"/>
        <end position="25"/>
    </location>
</feature>
<feature type="chain" id="PRO_0000433229" description="Adhesion G-protein coupled receptor F2" evidence="2">
    <location>
        <begin position="26"/>
        <end position="638"/>
    </location>
</feature>
<feature type="topological domain" description="Extracellular" evidence="4">
    <location>
        <begin position="26"/>
        <end position="386"/>
    </location>
</feature>
<feature type="transmembrane region" description="Helical; Name=1" evidence="2">
    <location>
        <begin position="387"/>
        <end position="407"/>
    </location>
</feature>
<feature type="topological domain" description="Cytoplasmic" evidence="4">
    <location>
        <begin position="408"/>
        <end position="422"/>
    </location>
</feature>
<feature type="transmembrane region" description="Helical; Name=2" evidence="2">
    <location>
        <begin position="423"/>
        <end position="443"/>
    </location>
</feature>
<feature type="topological domain" description="Extracellular" evidence="4">
    <location>
        <begin position="444"/>
        <end position="465"/>
    </location>
</feature>
<feature type="transmembrane region" description="Helical; Name=3" evidence="2">
    <location>
        <begin position="466"/>
        <end position="486"/>
    </location>
</feature>
<feature type="topological domain" description="Cytoplasmic" evidence="4">
    <location>
        <begin position="487"/>
        <end position="493"/>
    </location>
</feature>
<feature type="transmembrane region" description="Helical; Name=4" evidence="2">
    <location>
        <begin position="494"/>
        <end position="514"/>
    </location>
</feature>
<feature type="topological domain" description="Extracellular" evidence="4">
    <location>
        <begin position="515"/>
        <end position="541"/>
    </location>
</feature>
<feature type="transmembrane region" description="Helical; Name=5" evidence="2">
    <location>
        <begin position="542"/>
        <end position="562"/>
    </location>
</feature>
<feature type="topological domain" description="Cytoplasmic" evidence="4">
    <location>
        <begin position="563"/>
        <end position="586"/>
    </location>
</feature>
<feature type="transmembrane region" description="Helical; Name=6" evidence="2">
    <location>
        <begin position="587"/>
        <end position="607"/>
    </location>
</feature>
<feature type="topological domain" description="Extracellular" evidence="4">
    <location>
        <begin position="608"/>
        <end position="610"/>
    </location>
</feature>
<feature type="transmembrane region" description="Helical; Name=7" evidence="2">
    <location>
        <begin position="611"/>
        <end position="631"/>
    </location>
</feature>
<feature type="topological domain" description="Cytoplasmic" evidence="4">
    <location>
        <begin position="632"/>
        <end position="638"/>
    </location>
</feature>
<feature type="domain" description="GAIN-B" evidence="3">
    <location>
        <begin position="233"/>
        <end position="377"/>
    </location>
</feature>
<feature type="region of interest" description="GPS" evidence="3">
    <location>
        <begin position="329"/>
        <end position="377"/>
    </location>
</feature>
<feature type="glycosylation site" description="N-linked (GlcNAc...) asparagine" evidence="2">
    <location>
        <position position="155"/>
    </location>
</feature>
<feature type="glycosylation site" description="N-linked (GlcNAc...) asparagine" evidence="2">
    <location>
        <position position="219"/>
    </location>
</feature>
<feature type="glycosylation site" description="N-linked (GlcNAc...) asparagine" evidence="2">
    <location>
        <position position="248"/>
    </location>
</feature>
<feature type="glycosylation site" description="N-linked (GlcNAc...) asparagine" evidence="2">
    <location>
        <position position="293"/>
    </location>
</feature>
<feature type="glycosylation site" description="N-linked (GlcNAc...) asparagine" evidence="2">
    <location>
        <position position="311"/>
    </location>
</feature>
<feature type="disulfide bond" evidence="3">
    <location>
        <begin position="329"/>
        <end position="356"/>
    </location>
</feature>
<feature type="disulfide bond" evidence="3">
    <location>
        <begin position="344"/>
        <end position="358"/>
    </location>
</feature>
<organism>
    <name type="scientific">Rattus norvegicus</name>
    <name type="common">Rat</name>
    <dbReference type="NCBI Taxonomy" id="10116"/>
    <lineage>
        <taxon>Eukaryota</taxon>
        <taxon>Metazoa</taxon>
        <taxon>Chordata</taxon>
        <taxon>Craniata</taxon>
        <taxon>Vertebrata</taxon>
        <taxon>Euteleostomi</taxon>
        <taxon>Mammalia</taxon>
        <taxon>Eutheria</taxon>
        <taxon>Euarchontoglires</taxon>
        <taxon>Glires</taxon>
        <taxon>Rodentia</taxon>
        <taxon>Myomorpha</taxon>
        <taxon>Muroidea</taxon>
        <taxon>Muridae</taxon>
        <taxon>Murinae</taxon>
        <taxon>Rattus</taxon>
    </lineage>
</organism>
<accession>D4A3T6</accession>
<sequence>MISARWLYCLVLLLATESCRLFCQAASKSKENVMPRPHDVCDGVCKNNASPCFQSCPPNSEGNMKFACKAKRWHKVTETCHTLNAHSIFEEDKELYSVQSSESTIRTHMFNSGLKTITDTLMEKCPKDLSCVIRGIEKSPRIPGNIAVVVQLLHNISTTLTKGVDEEKMQSYSAMANHILNSKSISNWTFIQDRNSSCVLLQSINSFASNLFMKGHLINISHVFIHTLGTVVPRNSLGKNFTFSMRVNDTSDKVTGRILLTTEELQKVPSAFQVISIAFPTLGAILEASLLENMTVNGLVLSVILPKELKNISLIFEKIRKSGERKSQCVGWHSLESRWDRRACKMIQENSRQAICRCQPNKFFTSFSILMSPNTVESPVLTYITYIGLGISICSLIICLAIEALVWSQVTKTEISYLRHLCIANIAVTLLMADVWFIVASFLSGPIVHHNGCVTATFFVHFFYLSVFFWMLAKALLILYGILIVFHTLPKSCLVASLFTVGYGCPLVIAVITLAVTEPGKGYLRPEACWLNWDMTKALLAFVVPALAIVVVNLITVTLVIIKTQRAAVGSSMFQEVRAIVRICKNIAILTPLLGLTWGFGIATVVAGHSLAFHIIFSLLNALQVSPDAMIESEWRGC</sequence>